<protein>
    <recommendedName>
        <fullName evidence="1">Apolipoprotein N-acyltransferase</fullName>
        <shortName evidence="1">ALP N-acyltransferase</shortName>
        <ecNumber evidence="1">2.3.1.269</ecNumber>
    </recommendedName>
</protein>
<comment type="function">
    <text evidence="1">Catalyzes the phospholipid dependent N-acylation of the N-terminal cysteine of apolipoprotein, the last step in lipoprotein maturation.</text>
</comment>
<comment type="catalytic activity">
    <reaction evidence="1">
        <text>N-terminal S-1,2-diacyl-sn-glyceryl-L-cysteinyl-[lipoprotein] + a glycerophospholipid = N-acyl-S-1,2-diacyl-sn-glyceryl-L-cysteinyl-[lipoprotein] + a 2-acyl-sn-glycero-3-phospholipid + H(+)</text>
        <dbReference type="Rhea" id="RHEA:48228"/>
        <dbReference type="Rhea" id="RHEA-COMP:14681"/>
        <dbReference type="Rhea" id="RHEA-COMP:14684"/>
        <dbReference type="ChEBI" id="CHEBI:15378"/>
        <dbReference type="ChEBI" id="CHEBI:136912"/>
        <dbReference type="ChEBI" id="CHEBI:140656"/>
        <dbReference type="ChEBI" id="CHEBI:140657"/>
        <dbReference type="ChEBI" id="CHEBI:140660"/>
        <dbReference type="EC" id="2.3.1.269"/>
    </reaction>
</comment>
<comment type="pathway">
    <text evidence="1">Protein modification; lipoprotein biosynthesis (N-acyl transfer).</text>
</comment>
<comment type="subcellular location">
    <subcellularLocation>
        <location evidence="1">Cell inner membrane</location>
        <topology evidence="1">Multi-pass membrane protein</topology>
    </subcellularLocation>
</comment>
<comment type="similarity">
    <text evidence="1">Belongs to the CN hydrolase family. Apolipoprotein N-acyltransferase subfamily.</text>
</comment>
<evidence type="ECO:0000255" key="1">
    <source>
        <dbReference type="HAMAP-Rule" id="MF_01148"/>
    </source>
</evidence>
<gene>
    <name evidence="1" type="primary">lnt</name>
    <name type="ordered locus">Arad_0660</name>
</gene>
<dbReference type="EC" id="2.3.1.269" evidence="1"/>
<dbReference type="EMBL" id="CP000628">
    <property type="protein sequence ID" value="ACM25301.1"/>
    <property type="molecule type" value="Genomic_DNA"/>
</dbReference>
<dbReference type="RefSeq" id="WP_007695409.1">
    <property type="nucleotide sequence ID" value="NC_011985.1"/>
</dbReference>
<dbReference type="SMR" id="B9J8B4"/>
<dbReference type="STRING" id="311403.Arad_0660"/>
<dbReference type="GeneID" id="86847115"/>
<dbReference type="KEGG" id="ara:Arad_0660"/>
<dbReference type="eggNOG" id="COG0815">
    <property type="taxonomic scope" value="Bacteria"/>
</dbReference>
<dbReference type="HOGENOM" id="CLU_019563_3_1_5"/>
<dbReference type="UniPathway" id="UPA00666"/>
<dbReference type="Proteomes" id="UP000001600">
    <property type="component" value="Chromosome 1"/>
</dbReference>
<dbReference type="GO" id="GO:0005886">
    <property type="term" value="C:plasma membrane"/>
    <property type="evidence" value="ECO:0007669"/>
    <property type="project" value="UniProtKB-SubCell"/>
</dbReference>
<dbReference type="GO" id="GO:0016410">
    <property type="term" value="F:N-acyltransferase activity"/>
    <property type="evidence" value="ECO:0007669"/>
    <property type="project" value="UniProtKB-UniRule"/>
</dbReference>
<dbReference type="GO" id="GO:0042158">
    <property type="term" value="P:lipoprotein biosynthetic process"/>
    <property type="evidence" value="ECO:0007669"/>
    <property type="project" value="UniProtKB-UniRule"/>
</dbReference>
<dbReference type="CDD" id="cd07571">
    <property type="entry name" value="ALP_N-acyl_transferase"/>
    <property type="match status" value="1"/>
</dbReference>
<dbReference type="Gene3D" id="3.60.110.10">
    <property type="entry name" value="Carbon-nitrogen hydrolase"/>
    <property type="match status" value="1"/>
</dbReference>
<dbReference type="HAMAP" id="MF_01148">
    <property type="entry name" value="Lnt"/>
    <property type="match status" value="1"/>
</dbReference>
<dbReference type="InterPro" id="IPR004563">
    <property type="entry name" value="Apolipo_AcylTrfase"/>
</dbReference>
<dbReference type="InterPro" id="IPR003010">
    <property type="entry name" value="C-N_Hydrolase"/>
</dbReference>
<dbReference type="InterPro" id="IPR036526">
    <property type="entry name" value="C-N_Hydrolase_sf"/>
</dbReference>
<dbReference type="InterPro" id="IPR045378">
    <property type="entry name" value="LNT_N"/>
</dbReference>
<dbReference type="NCBIfam" id="TIGR00546">
    <property type="entry name" value="lnt"/>
    <property type="match status" value="1"/>
</dbReference>
<dbReference type="PANTHER" id="PTHR38686">
    <property type="entry name" value="APOLIPOPROTEIN N-ACYLTRANSFERASE"/>
    <property type="match status" value="1"/>
</dbReference>
<dbReference type="PANTHER" id="PTHR38686:SF1">
    <property type="entry name" value="APOLIPOPROTEIN N-ACYLTRANSFERASE"/>
    <property type="match status" value="1"/>
</dbReference>
<dbReference type="Pfam" id="PF00795">
    <property type="entry name" value="CN_hydrolase"/>
    <property type="match status" value="1"/>
</dbReference>
<dbReference type="Pfam" id="PF20154">
    <property type="entry name" value="LNT_N"/>
    <property type="match status" value="1"/>
</dbReference>
<dbReference type="SUPFAM" id="SSF56317">
    <property type="entry name" value="Carbon-nitrogen hydrolase"/>
    <property type="match status" value="1"/>
</dbReference>
<dbReference type="PROSITE" id="PS50263">
    <property type="entry name" value="CN_HYDROLASE"/>
    <property type="match status" value="1"/>
</dbReference>
<accession>B9J8B4</accession>
<proteinExistence type="inferred from homology"/>
<organism>
    <name type="scientific">Rhizobium rhizogenes (strain K84 / ATCC BAA-868)</name>
    <name type="common">Agrobacterium radiobacter</name>
    <dbReference type="NCBI Taxonomy" id="311403"/>
    <lineage>
        <taxon>Bacteria</taxon>
        <taxon>Pseudomonadati</taxon>
        <taxon>Pseudomonadota</taxon>
        <taxon>Alphaproteobacteria</taxon>
        <taxon>Hyphomicrobiales</taxon>
        <taxon>Rhizobiaceae</taxon>
        <taxon>Rhizobium/Agrobacterium group</taxon>
        <taxon>Rhizobium</taxon>
    </lineage>
</organism>
<feature type="chain" id="PRO_1000164159" description="Apolipoprotein N-acyltransferase">
    <location>
        <begin position="1"/>
        <end position="533"/>
    </location>
</feature>
<feature type="transmembrane region" description="Helical" evidence="1">
    <location>
        <begin position="17"/>
        <end position="37"/>
    </location>
</feature>
<feature type="transmembrane region" description="Helical" evidence="1">
    <location>
        <begin position="74"/>
        <end position="94"/>
    </location>
</feature>
<feature type="transmembrane region" description="Helical" evidence="1">
    <location>
        <begin position="105"/>
        <end position="125"/>
    </location>
</feature>
<feature type="transmembrane region" description="Helical" evidence="1">
    <location>
        <begin position="127"/>
        <end position="147"/>
    </location>
</feature>
<feature type="transmembrane region" description="Helical" evidence="1">
    <location>
        <begin position="178"/>
        <end position="198"/>
    </location>
</feature>
<feature type="transmembrane region" description="Helical" evidence="1">
    <location>
        <begin position="205"/>
        <end position="225"/>
    </location>
</feature>
<feature type="transmembrane region" description="Helical" evidence="1">
    <location>
        <begin position="509"/>
        <end position="529"/>
    </location>
</feature>
<feature type="domain" description="CN hydrolase" evidence="1">
    <location>
        <begin position="245"/>
        <end position="495"/>
    </location>
</feature>
<feature type="active site" description="Proton acceptor" evidence="1">
    <location>
        <position position="290"/>
    </location>
</feature>
<feature type="active site" evidence="1">
    <location>
        <position position="354"/>
    </location>
</feature>
<feature type="active site" description="Nucleophile" evidence="1">
    <location>
        <position position="407"/>
    </location>
</feature>
<keyword id="KW-0012">Acyltransferase</keyword>
<keyword id="KW-0997">Cell inner membrane</keyword>
<keyword id="KW-1003">Cell membrane</keyword>
<keyword id="KW-0472">Membrane</keyword>
<keyword id="KW-0808">Transferase</keyword>
<keyword id="KW-0812">Transmembrane</keyword>
<keyword id="KW-1133">Transmembrane helix</keyword>
<name>LNT_RHIR8</name>
<sequence>MERLSGKVILVWGFKRALLAILAGAIGVLALPPFGFFAAMFVSFTLLVWLLDGAAAGPDSGFLGRLWPAFTTGWLFGFGYFVAGLWWLGHALLIDADQFAWALPLAILGLPAFLAIFYGVAAVLARLLWSDGMGRIAALAFGFGLLEWLRSFLFTGFPWNAIGYGAMPIPLMMQSAHVIGVLGVTVLAVFVFAAPALLGTRQGRVPGIGLAVLIAAAHFAYGYYALNLPALPPAAGKAAPVVRIVQPAIDQEAKMDTAADRNAIFDKHLSLSVQPPVNGGKRPDIIVWPETAIPFILTDNQDALTRIADQLDDDQILITGAVRVEDMGPGVEPRYYNSVYVIDGRGQIIGASDKTHLVPFGEYVPFENILGYLGIENVVELPGGFSAAASRQLLTLPDGIKLYPLICYEIIFPNEMTPEIRQADAILNVTNDAWFGDTPGPYQHFLQARVRAVEQGLPLIRSANTGVSAYVDAHGRLISGIDFNEQGFVDSTLSGATVSRIDDSVRKTYFWLIIGIVGMIAVISRMGFISRVN</sequence>
<reference key="1">
    <citation type="journal article" date="2009" name="J. Bacteriol.">
        <title>Genome sequences of three Agrobacterium biovars help elucidate the evolution of multichromosome genomes in bacteria.</title>
        <authorList>
            <person name="Slater S.C."/>
            <person name="Goldman B.S."/>
            <person name="Goodner B."/>
            <person name="Setubal J.C."/>
            <person name="Farrand S.K."/>
            <person name="Nester E.W."/>
            <person name="Burr T.J."/>
            <person name="Banta L."/>
            <person name="Dickerman A.W."/>
            <person name="Paulsen I."/>
            <person name="Otten L."/>
            <person name="Suen G."/>
            <person name="Welch R."/>
            <person name="Almeida N.F."/>
            <person name="Arnold F."/>
            <person name="Burton O.T."/>
            <person name="Du Z."/>
            <person name="Ewing A."/>
            <person name="Godsy E."/>
            <person name="Heisel S."/>
            <person name="Houmiel K.L."/>
            <person name="Jhaveri J."/>
            <person name="Lu J."/>
            <person name="Miller N.M."/>
            <person name="Norton S."/>
            <person name="Chen Q."/>
            <person name="Phoolcharoen W."/>
            <person name="Ohlin V."/>
            <person name="Ondrusek D."/>
            <person name="Pride N."/>
            <person name="Stricklin S.L."/>
            <person name="Sun J."/>
            <person name="Wheeler C."/>
            <person name="Wilson L."/>
            <person name="Zhu H."/>
            <person name="Wood D.W."/>
        </authorList>
    </citation>
    <scope>NUCLEOTIDE SEQUENCE [LARGE SCALE GENOMIC DNA]</scope>
    <source>
        <strain>K84 / ATCC BAA-868</strain>
    </source>
</reference>